<feature type="chain" id="PRO_1000096356" description="Phosphoglycerate kinase">
    <location>
        <begin position="1"/>
        <end position="405"/>
    </location>
</feature>
<feature type="binding site" evidence="1">
    <location>
        <begin position="21"/>
        <end position="23"/>
    </location>
    <ligand>
        <name>substrate</name>
    </ligand>
</feature>
<feature type="binding site" evidence="1">
    <location>
        <position position="36"/>
    </location>
    <ligand>
        <name>substrate</name>
    </ligand>
</feature>
<feature type="binding site" evidence="1">
    <location>
        <begin position="59"/>
        <end position="62"/>
    </location>
    <ligand>
        <name>substrate</name>
    </ligand>
</feature>
<feature type="binding site" evidence="1">
    <location>
        <position position="119"/>
    </location>
    <ligand>
        <name>substrate</name>
    </ligand>
</feature>
<feature type="binding site" evidence="1">
    <location>
        <position position="161"/>
    </location>
    <ligand>
        <name>substrate</name>
    </ligand>
</feature>
<feature type="binding site" evidence="1">
    <location>
        <position position="212"/>
    </location>
    <ligand>
        <name>ATP</name>
        <dbReference type="ChEBI" id="CHEBI:30616"/>
    </ligand>
</feature>
<feature type="binding site" evidence="1">
    <location>
        <position position="301"/>
    </location>
    <ligand>
        <name>ATP</name>
        <dbReference type="ChEBI" id="CHEBI:30616"/>
    </ligand>
</feature>
<feature type="binding site" evidence="1">
    <location>
        <position position="332"/>
    </location>
    <ligand>
        <name>ATP</name>
        <dbReference type="ChEBI" id="CHEBI:30616"/>
    </ligand>
</feature>
<feature type="binding site" evidence="1">
    <location>
        <begin position="361"/>
        <end position="364"/>
    </location>
    <ligand>
        <name>ATP</name>
        <dbReference type="ChEBI" id="CHEBI:30616"/>
    </ligand>
</feature>
<sequence>MAKLTVSDLELSGKKVLMRVDFNVPIKAGVIGNDNRIVAALPTIKYVLENNGRAILFSHLGRIKSEDDKKELSLAPVAARLGELLGKNVKFVPHTRGEELESAINALQDGEVLMVENTRFEDVVDGVEVKNESKNNPELGKYWAGLGDDLFINDAFGTAHRAHASNVGIASNVSQVAAGFLMEKEIKFLGDAVANPVRPFVAIIGGAKVSDKIEIVKSLLAKADKVIVGGGMAYTFDAAKGEKIGNSLFEADKVELAKELMAEAGDKLVLPVDSIAADAFSNDAKTEVVDATAGIPDGYMGLDIGPKSVKLLQDTLADAKTVVWNGPMGVFEMPNFAKGTLAIGEELVKVTENGGTTIVGGGDSTAAVQQLGVADKLSHISTGGGASLEYLEGKELPGIASISEK</sequence>
<dbReference type="EC" id="2.7.2.3" evidence="1"/>
<dbReference type="EMBL" id="DQ489736">
    <property type="protein sequence ID" value="ACA83434.1"/>
    <property type="molecule type" value="Genomic_DNA"/>
</dbReference>
<dbReference type="RefSeq" id="WP_012305438.1">
    <property type="nucleotide sequence ID" value="NC_010471.1"/>
</dbReference>
<dbReference type="SMR" id="B1MW69"/>
<dbReference type="STRING" id="349519.LCK_01611"/>
<dbReference type="KEGG" id="lci:LCK_01611"/>
<dbReference type="eggNOG" id="COG0126">
    <property type="taxonomic scope" value="Bacteria"/>
</dbReference>
<dbReference type="HOGENOM" id="CLU_025427_0_2_9"/>
<dbReference type="OrthoDB" id="9808460at2"/>
<dbReference type="UniPathway" id="UPA00109">
    <property type="reaction ID" value="UER00185"/>
</dbReference>
<dbReference type="Proteomes" id="UP000002166">
    <property type="component" value="Chromosome"/>
</dbReference>
<dbReference type="GO" id="GO:0005829">
    <property type="term" value="C:cytosol"/>
    <property type="evidence" value="ECO:0007669"/>
    <property type="project" value="TreeGrafter"/>
</dbReference>
<dbReference type="GO" id="GO:0043531">
    <property type="term" value="F:ADP binding"/>
    <property type="evidence" value="ECO:0007669"/>
    <property type="project" value="TreeGrafter"/>
</dbReference>
<dbReference type="GO" id="GO:0005524">
    <property type="term" value="F:ATP binding"/>
    <property type="evidence" value="ECO:0007669"/>
    <property type="project" value="UniProtKB-KW"/>
</dbReference>
<dbReference type="GO" id="GO:0004618">
    <property type="term" value="F:phosphoglycerate kinase activity"/>
    <property type="evidence" value="ECO:0007669"/>
    <property type="project" value="UniProtKB-UniRule"/>
</dbReference>
<dbReference type="GO" id="GO:0006094">
    <property type="term" value="P:gluconeogenesis"/>
    <property type="evidence" value="ECO:0007669"/>
    <property type="project" value="TreeGrafter"/>
</dbReference>
<dbReference type="GO" id="GO:0006096">
    <property type="term" value="P:glycolytic process"/>
    <property type="evidence" value="ECO:0007669"/>
    <property type="project" value="UniProtKB-UniRule"/>
</dbReference>
<dbReference type="CDD" id="cd00318">
    <property type="entry name" value="Phosphoglycerate_kinase"/>
    <property type="match status" value="1"/>
</dbReference>
<dbReference type="FunFam" id="3.40.50.1260:FF:000007">
    <property type="entry name" value="Phosphoglycerate kinase"/>
    <property type="match status" value="1"/>
</dbReference>
<dbReference type="FunFam" id="3.40.50.1260:FF:000008">
    <property type="entry name" value="Phosphoglycerate kinase"/>
    <property type="match status" value="1"/>
</dbReference>
<dbReference type="Gene3D" id="3.40.50.1260">
    <property type="entry name" value="Phosphoglycerate kinase, N-terminal domain"/>
    <property type="match status" value="2"/>
</dbReference>
<dbReference type="HAMAP" id="MF_00145">
    <property type="entry name" value="Phosphoglyc_kinase"/>
    <property type="match status" value="1"/>
</dbReference>
<dbReference type="InterPro" id="IPR001576">
    <property type="entry name" value="Phosphoglycerate_kinase"/>
</dbReference>
<dbReference type="InterPro" id="IPR015911">
    <property type="entry name" value="Phosphoglycerate_kinase_CS"/>
</dbReference>
<dbReference type="InterPro" id="IPR015824">
    <property type="entry name" value="Phosphoglycerate_kinase_N"/>
</dbReference>
<dbReference type="InterPro" id="IPR036043">
    <property type="entry name" value="Phosphoglycerate_kinase_sf"/>
</dbReference>
<dbReference type="PANTHER" id="PTHR11406">
    <property type="entry name" value="PHOSPHOGLYCERATE KINASE"/>
    <property type="match status" value="1"/>
</dbReference>
<dbReference type="PANTHER" id="PTHR11406:SF23">
    <property type="entry name" value="PHOSPHOGLYCERATE KINASE 1, CHLOROPLASTIC-RELATED"/>
    <property type="match status" value="1"/>
</dbReference>
<dbReference type="Pfam" id="PF00162">
    <property type="entry name" value="PGK"/>
    <property type="match status" value="1"/>
</dbReference>
<dbReference type="PIRSF" id="PIRSF000724">
    <property type="entry name" value="Pgk"/>
    <property type="match status" value="1"/>
</dbReference>
<dbReference type="PRINTS" id="PR00477">
    <property type="entry name" value="PHGLYCKINASE"/>
</dbReference>
<dbReference type="SUPFAM" id="SSF53748">
    <property type="entry name" value="Phosphoglycerate kinase"/>
    <property type="match status" value="1"/>
</dbReference>
<dbReference type="PROSITE" id="PS00111">
    <property type="entry name" value="PGLYCERATE_KINASE"/>
    <property type="match status" value="1"/>
</dbReference>
<reference key="1">
    <citation type="journal article" date="2008" name="J. Bacteriol.">
        <title>Complete genome sequence of Leuconostoc citreum KM20.</title>
        <authorList>
            <person name="Kim J.F."/>
            <person name="Jeong H."/>
            <person name="Lee J.-S."/>
            <person name="Choi S.-H."/>
            <person name="Ha M."/>
            <person name="Hur C.-G."/>
            <person name="Kim J.-S."/>
            <person name="Lee S."/>
            <person name="Park H.-S."/>
            <person name="Park Y.-H."/>
            <person name="Oh T.K."/>
        </authorList>
    </citation>
    <scope>NUCLEOTIDE SEQUENCE [LARGE SCALE GENOMIC DNA]</scope>
    <source>
        <strain>KM20</strain>
    </source>
</reference>
<gene>
    <name evidence="1" type="primary">pgk</name>
    <name type="ordered locus">LCK_01611</name>
</gene>
<protein>
    <recommendedName>
        <fullName evidence="1">Phosphoglycerate kinase</fullName>
        <ecNumber evidence="1">2.7.2.3</ecNumber>
    </recommendedName>
</protein>
<name>PGK_LEUCK</name>
<organism>
    <name type="scientific">Leuconostoc citreum (strain KM20)</name>
    <dbReference type="NCBI Taxonomy" id="349519"/>
    <lineage>
        <taxon>Bacteria</taxon>
        <taxon>Bacillati</taxon>
        <taxon>Bacillota</taxon>
        <taxon>Bacilli</taxon>
        <taxon>Lactobacillales</taxon>
        <taxon>Lactobacillaceae</taxon>
        <taxon>Leuconostoc</taxon>
    </lineage>
</organism>
<accession>B1MW69</accession>
<comment type="catalytic activity">
    <reaction evidence="1">
        <text>(2R)-3-phosphoglycerate + ATP = (2R)-3-phospho-glyceroyl phosphate + ADP</text>
        <dbReference type="Rhea" id="RHEA:14801"/>
        <dbReference type="ChEBI" id="CHEBI:30616"/>
        <dbReference type="ChEBI" id="CHEBI:57604"/>
        <dbReference type="ChEBI" id="CHEBI:58272"/>
        <dbReference type="ChEBI" id="CHEBI:456216"/>
        <dbReference type="EC" id="2.7.2.3"/>
    </reaction>
</comment>
<comment type="pathway">
    <text evidence="1">Carbohydrate degradation; glycolysis; pyruvate from D-glyceraldehyde 3-phosphate: step 2/5.</text>
</comment>
<comment type="subunit">
    <text evidence="1">Monomer.</text>
</comment>
<comment type="subcellular location">
    <subcellularLocation>
        <location evidence="1">Cytoplasm</location>
    </subcellularLocation>
</comment>
<comment type="similarity">
    <text evidence="1">Belongs to the phosphoglycerate kinase family.</text>
</comment>
<keyword id="KW-0067">ATP-binding</keyword>
<keyword id="KW-0963">Cytoplasm</keyword>
<keyword id="KW-0324">Glycolysis</keyword>
<keyword id="KW-0418">Kinase</keyword>
<keyword id="KW-0547">Nucleotide-binding</keyword>
<keyword id="KW-1185">Reference proteome</keyword>
<keyword id="KW-0808">Transferase</keyword>
<proteinExistence type="inferred from homology"/>
<evidence type="ECO:0000255" key="1">
    <source>
        <dbReference type="HAMAP-Rule" id="MF_00145"/>
    </source>
</evidence>